<proteinExistence type="inferred from homology"/>
<comment type="function">
    <text evidence="1">Cleaves the N-terminal amino acid of tripeptides.</text>
</comment>
<comment type="catalytic activity">
    <reaction evidence="1">
        <text>Release of the N-terminal residue from a tripeptide.</text>
        <dbReference type="EC" id="3.4.11.4"/>
    </reaction>
</comment>
<comment type="cofactor">
    <cofactor evidence="1">
        <name>Zn(2+)</name>
        <dbReference type="ChEBI" id="CHEBI:29105"/>
    </cofactor>
    <text evidence="1">Binds 2 Zn(2+) ions per subunit.</text>
</comment>
<comment type="subcellular location">
    <subcellularLocation>
        <location evidence="1">Cytoplasm</location>
    </subcellularLocation>
</comment>
<comment type="similarity">
    <text evidence="1">Belongs to the peptidase M20B family.</text>
</comment>
<keyword id="KW-0031">Aminopeptidase</keyword>
<keyword id="KW-0963">Cytoplasm</keyword>
<keyword id="KW-0378">Hydrolase</keyword>
<keyword id="KW-0479">Metal-binding</keyword>
<keyword id="KW-0482">Metalloprotease</keyword>
<keyword id="KW-0645">Protease</keyword>
<keyword id="KW-0862">Zinc</keyword>
<accession>C3L049</accession>
<evidence type="ECO:0000255" key="1">
    <source>
        <dbReference type="HAMAP-Rule" id="MF_00550"/>
    </source>
</evidence>
<sequence length="408" mass="45624">MKDVLERFLGYIRIDTQSSEESDTVPTTKTQLEFAKKLGEELKAIGLKDVSVDENGYVMATLESNIDKKVPTIGFIAHMDTSPDLSGTNINPRIVEKYDGQDIVLNKEKNIVLKINEFPEILEYKGQDIVVTDGNTLLGADDKAGIAEIITAMEYLINHPEIKHGTIKVGFTPDEEVGKGADHFDVKKFGADLAYTLDGGGIGELECETFNAAKAKVIIEGRNVHPGSAKNKMTNAVLVANKFINMLPENEVPERTEGYEGFFHLLSVKSEVETAELNYIIRDFDRKKFEERKEQIKEVGKKINEEYNKEIVCVKVEDQYYNMKEKIDEVKYVVDIAHDAMKAIDIEPILVPIRGGTDGSRLSFMGLPTPNLFAGGHNFHGRFEFVPVLSMEKAAELVVKIAELYANR</sequence>
<gene>
    <name evidence="1" type="primary">pepT</name>
    <name type="ordered locus">CLJ_B0509</name>
</gene>
<name>PEPT_CLOB6</name>
<dbReference type="EC" id="3.4.11.4" evidence="1"/>
<dbReference type="EMBL" id="CP001083">
    <property type="protein sequence ID" value="ACQ54839.1"/>
    <property type="molecule type" value="Genomic_DNA"/>
</dbReference>
<dbReference type="RefSeq" id="WP_003359651.1">
    <property type="nucleotide sequence ID" value="NC_012658.1"/>
</dbReference>
<dbReference type="SMR" id="C3L049"/>
<dbReference type="MEROPS" id="M20.003"/>
<dbReference type="KEGG" id="cbi:CLJ_B0509"/>
<dbReference type="HOGENOM" id="CLU_053676_0_0_9"/>
<dbReference type="Proteomes" id="UP000002333">
    <property type="component" value="Chromosome"/>
</dbReference>
<dbReference type="GO" id="GO:0005829">
    <property type="term" value="C:cytosol"/>
    <property type="evidence" value="ECO:0007669"/>
    <property type="project" value="TreeGrafter"/>
</dbReference>
<dbReference type="GO" id="GO:0008237">
    <property type="term" value="F:metallopeptidase activity"/>
    <property type="evidence" value="ECO:0007669"/>
    <property type="project" value="UniProtKB-KW"/>
</dbReference>
<dbReference type="GO" id="GO:0045148">
    <property type="term" value="F:tripeptide aminopeptidase activity"/>
    <property type="evidence" value="ECO:0007669"/>
    <property type="project" value="UniProtKB-UniRule"/>
</dbReference>
<dbReference type="GO" id="GO:0008270">
    <property type="term" value="F:zinc ion binding"/>
    <property type="evidence" value="ECO:0007669"/>
    <property type="project" value="UniProtKB-UniRule"/>
</dbReference>
<dbReference type="GO" id="GO:0043171">
    <property type="term" value="P:peptide catabolic process"/>
    <property type="evidence" value="ECO:0007669"/>
    <property type="project" value="UniProtKB-UniRule"/>
</dbReference>
<dbReference type="GO" id="GO:0006508">
    <property type="term" value="P:proteolysis"/>
    <property type="evidence" value="ECO:0007669"/>
    <property type="project" value="UniProtKB-UniRule"/>
</dbReference>
<dbReference type="CDD" id="cd03892">
    <property type="entry name" value="M20_peptT"/>
    <property type="match status" value="1"/>
</dbReference>
<dbReference type="FunFam" id="3.30.70.360:FF:000002">
    <property type="entry name" value="Peptidase T"/>
    <property type="match status" value="1"/>
</dbReference>
<dbReference type="Gene3D" id="3.30.70.360">
    <property type="match status" value="1"/>
</dbReference>
<dbReference type="Gene3D" id="3.40.630.10">
    <property type="entry name" value="Zn peptidases"/>
    <property type="match status" value="1"/>
</dbReference>
<dbReference type="HAMAP" id="MF_00550">
    <property type="entry name" value="Aminopeptidase_M20"/>
    <property type="match status" value="1"/>
</dbReference>
<dbReference type="InterPro" id="IPR001261">
    <property type="entry name" value="ArgE/DapE_CS"/>
</dbReference>
<dbReference type="InterPro" id="IPR036264">
    <property type="entry name" value="Bact_exopeptidase_dim_dom"/>
</dbReference>
<dbReference type="InterPro" id="IPR002933">
    <property type="entry name" value="Peptidase_M20"/>
</dbReference>
<dbReference type="InterPro" id="IPR011650">
    <property type="entry name" value="Peptidase_M20_dimer"/>
</dbReference>
<dbReference type="InterPro" id="IPR010161">
    <property type="entry name" value="Peptidase_M20B"/>
</dbReference>
<dbReference type="NCBIfam" id="TIGR01882">
    <property type="entry name" value="peptidase-T"/>
    <property type="match status" value="1"/>
</dbReference>
<dbReference type="NCBIfam" id="NF003976">
    <property type="entry name" value="PRK05469.1"/>
    <property type="match status" value="1"/>
</dbReference>
<dbReference type="NCBIfam" id="NF009920">
    <property type="entry name" value="PRK13381.1"/>
    <property type="match status" value="1"/>
</dbReference>
<dbReference type="PANTHER" id="PTHR42994">
    <property type="entry name" value="PEPTIDASE T"/>
    <property type="match status" value="1"/>
</dbReference>
<dbReference type="PANTHER" id="PTHR42994:SF1">
    <property type="entry name" value="PEPTIDASE T"/>
    <property type="match status" value="1"/>
</dbReference>
<dbReference type="Pfam" id="PF07687">
    <property type="entry name" value="M20_dimer"/>
    <property type="match status" value="1"/>
</dbReference>
<dbReference type="Pfam" id="PF01546">
    <property type="entry name" value="Peptidase_M20"/>
    <property type="match status" value="1"/>
</dbReference>
<dbReference type="PIRSF" id="PIRSF037215">
    <property type="entry name" value="Peptidase_M20B"/>
    <property type="match status" value="1"/>
</dbReference>
<dbReference type="SUPFAM" id="SSF55031">
    <property type="entry name" value="Bacterial exopeptidase dimerisation domain"/>
    <property type="match status" value="1"/>
</dbReference>
<dbReference type="SUPFAM" id="SSF53187">
    <property type="entry name" value="Zn-dependent exopeptidases"/>
    <property type="match status" value="1"/>
</dbReference>
<dbReference type="PROSITE" id="PS00758">
    <property type="entry name" value="ARGE_DAPE_CPG2_1"/>
    <property type="match status" value="1"/>
</dbReference>
<dbReference type="PROSITE" id="PS00759">
    <property type="entry name" value="ARGE_DAPE_CPG2_2"/>
    <property type="match status" value="1"/>
</dbReference>
<protein>
    <recommendedName>
        <fullName evidence="1">Peptidase T</fullName>
        <ecNumber evidence="1">3.4.11.4</ecNumber>
    </recommendedName>
    <alternativeName>
        <fullName evidence="1">Aminotripeptidase</fullName>
        <shortName evidence="1">Tripeptidase</shortName>
    </alternativeName>
    <alternativeName>
        <fullName evidence="1">Tripeptide aminopeptidase</fullName>
    </alternativeName>
</protein>
<organism>
    <name type="scientific">Clostridium botulinum (strain 657 / Type Ba4)</name>
    <dbReference type="NCBI Taxonomy" id="515621"/>
    <lineage>
        <taxon>Bacteria</taxon>
        <taxon>Bacillati</taxon>
        <taxon>Bacillota</taxon>
        <taxon>Clostridia</taxon>
        <taxon>Eubacteriales</taxon>
        <taxon>Clostridiaceae</taxon>
        <taxon>Clostridium</taxon>
    </lineage>
</organism>
<feature type="chain" id="PRO_1000211989" description="Peptidase T">
    <location>
        <begin position="1"/>
        <end position="408"/>
    </location>
</feature>
<feature type="active site" evidence="1">
    <location>
        <position position="80"/>
    </location>
</feature>
<feature type="active site" description="Proton acceptor" evidence="1">
    <location>
        <position position="175"/>
    </location>
</feature>
<feature type="binding site" evidence="1">
    <location>
        <position position="78"/>
    </location>
    <ligand>
        <name>Zn(2+)</name>
        <dbReference type="ChEBI" id="CHEBI:29105"/>
        <label>1</label>
    </ligand>
</feature>
<feature type="binding site" evidence="1">
    <location>
        <position position="141"/>
    </location>
    <ligand>
        <name>Zn(2+)</name>
        <dbReference type="ChEBI" id="CHEBI:29105"/>
        <label>1</label>
    </ligand>
</feature>
<feature type="binding site" evidence="1">
    <location>
        <position position="141"/>
    </location>
    <ligand>
        <name>Zn(2+)</name>
        <dbReference type="ChEBI" id="CHEBI:29105"/>
        <label>2</label>
    </ligand>
</feature>
<feature type="binding site" evidence="1">
    <location>
        <position position="176"/>
    </location>
    <ligand>
        <name>Zn(2+)</name>
        <dbReference type="ChEBI" id="CHEBI:29105"/>
        <label>2</label>
    </ligand>
</feature>
<feature type="binding site" evidence="1">
    <location>
        <position position="198"/>
    </location>
    <ligand>
        <name>Zn(2+)</name>
        <dbReference type="ChEBI" id="CHEBI:29105"/>
        <label>1</label>
    </ligand>
</feature>
<feature type="binding site" evidence="1">
    <location>
        <position position="380"/>
    </location>
    <ligand>
        <name>Zn(2+)</name>
        <dbReference type="ChEBI" id="CHEBI:29105"/>
        <label>2</label>
    </ligand>
</feature>
<reference key="1">
    <citation type="submission" date="2008-05" db="EMBL/GenBank/DDBJ databases">
        <title>Genome sequence of Clostridium botulinum Ba4 strain 657.</title>
        <authorList>
            <person name="Shrivastava S."/>
            <person name="Brown J.L."/>
            <person name="Bruce D."/>
            <person name="Detter C."/>
            <person name="Munk C."/>
            <person name="Smith L.A."/>
            <person name="Smith T.J."/>
            <person name="Sutton G."/>
            <person name="Brettin T.S."/>
        </authorList>
    </citation>
    <scope>NUCLEOTIDE SEQUENCE [LARGE SCALE GENOMIC DNA]</scope>
    <source>
        <strain>657 / Type Ba4</strain>
    </source>
</reference>